<evidence type="ECO:0000250" key="1"/>
<evidence type="ECO:0000255" key="2">
    <source>
        <dbReference type="PROSITE-ProRule" id="PRU00434"/>
    </source>
</evidence>
<evidence type="ECO:0000269" key="3">
    <source>
    </source>
</evidence>
<evidence type="ECO:0000305" key="4"/>
<evidence type="ECO:0000305" key="5">
    <source>
    </source>
</evidence>
<dbReference type="EC" id="7.5.2.8" evidence="5"/>
<dbReference type="EMBL" id="U14003">
    <property type="protein sequence ID" value="AAA96986.1"/>
    <property type="molecule type" value="Genomic_DNA"/>
</dbReference>
<dbReference type="EMBL" id="U00096">
    <property type="protein sequence ID" value="AAC77048.1"/>
    <property type="molecule type" value="Genomic_DNA"/>
</dbReference>
<dbReference type="EMBL" id="AP009048">
    <property type="protein sequence ID" value="BAE78090.1"/>
    <property type="molecule type" value="Genomic_DNA"/>
</dbReference>
<dbReference type="EMBL" id="U00006">
    <property type="protein sequence ID" value="AAC43181.1"/>
    <property type="molecule type" value="Genomic_DNA"/>
</dbReference>
<dbReference type="PIR" id="S56315">
    <property type="entry name" value="S56315"/>
</dbReference>
<dbReference type="RefSeq" id="NP_418511.1">
    <property type="nucleotide sequence ID" value="NC_000913.3"/>
</dbReference>
<dbReference type="RefSeq" id="WP_000235257.1">
    <property type="nucleotide sequence ID" value="NZ_SSZK01000016.1"/>
</dbReference>
<dbReference type="SMR" id="P32721"/>
<dbReference type="BioGRID" id="4260960">
    <property type="interactions" value="12"/>
</dbReference>
<dbReference type="ComplexPortal" id="CPX-4320">
    <property type="entry name" value="D-allose ABC transporter complex"/>
</dbReference>
<dbReference type="DIP" id="DIP-9093N"/>
<dbReference type="FunCoup" id="P32721">
    <property type="interactions" value="442"/>
</dbReference>
<dbReference type="IntAct" id="P32721">
    <property type="interactions" value="5"/>
</dbReference>
<dbReference type="STRING" id="511145.b4087"/>
<dbReference type="TCDB" id="3.A.1.2.6">
    <property type="family name" value="the atp-binding cassette (abc) superfamily"/>
</dbReference>
<dbReference type="PaxDb" id="511145-b4087"/>
<dbReference type="EnsemblBacteria" id="AAC77048">
    <property type="protein sequence ID" value="AAC77048"/>
    <property type="gene ID" value="b4087"/>
</dbReference>
<dbReference type="GeneID" id="948593"/>
<dbReference type="KEGG" id="ecj:JW4048"/>
<dbReference type="KEGG" id="eco:b4087"/>
<dbReference type="KEGG" id="ecoc:C3026_22095"/>
<dbReference type="PATRIC" id="fig|1411691.4.peg.2613"/>
<dbReference type="EchoBASE" id="EB1902"/>
<dbReference type="eggNOG" id="COG1129">
    <property type="taxonomic scope" value="Bacteria"/>
</dbReference>
<dbReference type="HOGENOM" id="CLU_000604_92_3_6"/>
<dbReference type="InParanoid" id="P32721"/>
<dbReference type="OMA" id="HKMNEIF"/>
<dbReference type="OrthoDB" id="9776369at2"/>
<dbReference type="PhylomeDB" id="P32721"/>
<dbReference type="BioCyc" id="EcoCyc:YJCW-MONOMER"/>
<dbReference type="BioCyc" id="MetaCyc:YJCW-MONOMER"/>
<dbReference type="PRO" id="PR:P32721"/>
<dbReference type="Proteomes" id="UP000000625">
    <property type="component" value="Chromosome"/>
</dbReference>
<dbReference type="GO" id="GO:0055052">
    <property type="term" value="C:ATP-binding cassette (ABC) transporter complex, substrate-binding subunit-containing"/>
    <property type="evidence" value="ECO:0000303"/>
    <property type="project" value="ComplexPortal"/>
</dbReference>
<dbReference type="GO" id="GO:0016020">
    <property type="term" value="C:membrane"/>
    <property type="evidence" value="ECO:0000303"/>
    <property type="project" value="ComplexPortal"/>
</dbReference>
<dbReference type="GO" id="GO:0005886">
    <property type="term" value="C:plasma membrane"/>
    <property type="evidence" value="ECO:0000314"/>
    <property type="project" value="EcoCyc"/>
</dbReference>
<dbReference type="GO" id="GO:0015615">
    <property type="term" value="F:ABC-type D-allose transporter activity"/>
    <property type="evidence" value="ECO:0007669"/>
    <property type="project" value="UniProtKB-EC"/>
</dbReference>
<dbReference type="GO" id="GO:0005524">
    <property type="term" value="F:ATP binding"/>
    <property type="evidence" value="ECO:0000255"/>
    <property type="project" value="EcoCyc"/>
</dbReference>
<dbReference type="GO" id="GO:0016887">
    <property type="term" value="F:ATP hydrolysis activity"/>
    <property type="evidence" value="ECO:0007669"/>
    <property type="project" value="InterPro"/>
</dbReference>
<dbReference type="GO" id="GO:0015754">
    <property type="term" value="P:D-allose transmembrane transport"/>
    <property type="evidence" value="ECO:0000269"/>
    <property type="project" value="EcoCyc"/>
</dbReference>
<dbReference type="GO" id="GO:0015752">
    <property type="term" value="P:D-ribose transmembrane transport"/>
    <property type="evidence" value="ECO:0000303"/>
    <property type="project" value="ComplexPortal"/>
</dbReference>
<dbReference type="CDD" id="cd03216">
    <property type="entry name" value="ABC_Carb_Monos_I"/>
    <property type="match status" value="1"/>
</dbReference>
<dbReference type="CDD" id="cd03215">
    <property type="entry name" value="ABC_Carb_Monos_II"/>
    <property type="match status" value="1"/>
</dbReference>
<dbReference type="FunFam" id="3.40.50.300:FF:000126">
    <property type="entry name" value="Galactose/methyl galactoside import ATP-binding protein MglA"/>
    <property type="match status" value="1"/>
</dbReference>
<dbReference type="FunFam" id="3.40.50.300:FF:000127">
    <property type="entry name" value="Ribose import ATP-binding protein RbsA"/>
    <property type="match status" value="1"/>
</dbReference>
<dbReference type="Gene3D" id="3.40.50.300">
    <property type="entry name" value="P-loop containing nucleotide triphosphate hydrolases"/>
    <property type="match status" value="2"/>
</dbReference>
<dbReference type="InterPro" id="IPR003593">
    <property type="entry name" value="AAA+_ATPase"/>
</dbReference>
<dbReference type="InterPro" id="IPR050107">
    <property type="entry name" value="ABC_carbohydrate_import_ATPase"/>
</dbReference>
<dbReference type="InterPro" id="IPR003439">
    <property type="entry name" value="ABC_transporter-like_ATP-bd"/>
</dbReference>
<dbReference type="InterPro" id="IPR017871">
    <property type="entry name" value="ABC_transporter-like_CS"/>
</dbReference>
<dbReference type="InterPro" id="IPR027417">
    <property type="entry name" value="P-loop_NTPase"/>
</dbReference>
<dbReference type="NCBIfam" id="NF007253">
    <property type="entry name" value="PRK09700.1"/>
    <property type="match status" value="1"/>
</dbReference>
<dbReference type="PANTHER" id="PTHR43790">
    <property type="entry name" value="CARBOHYDRATE TRANSPORT ATP-BINDING PROTEIN MG119-RELATED"/>
    <property type="match status" value="1"/>
</dbReference>
<dbReference type="PANTHER" id="PTHR43790:SF3">
    <property type="entry name" value="D-ALLOSE IMPORT ATP-BINDING PROTEIN ALSA-RELATED"/>
    <property type="match status" value="1"/>
</dbReference>
<dbReference type="Pfam" id="PF00005">
    <property type="entry name" value="ABC_tran"/>
    <property type="match status" value="2"/>
</dbReference>
<dbReference type="SMART" id="SM00382">
    <property type="entry name" value="AAA"/>
    <property type="match status" value="2"/>
</dbReference>
<dbReference type="SUPFAM" id="SSF52540">
    <property type="entry name" value="P-loop containing nucleoside triphosphate hydrolases"/>
    <property type="match status" value="2"/>
</dbReference>
<dbReference type="PROSITE" id="PS00211">
    <property type="entry name" value="ABC_TRANSPORTER_1"/>
    <property type="match status" value="1"/>
</dbReference>
<dbReference type="PROSITE" id="PS50893">
    <property type="entry name" value="ABC_TRANSPORTER_2"/>
    <property type="match status" value="2"/>
</dbReference>
<protein>
    <recommendedName>
        <fullName>D-allose import ATP-binding protein AlsA</fullName>
        <ecNumber evidence="5">7.5.2.8</ecNumber>
    </recommendedName>
</protein>
<accession>P32721</accession>
<accession>Q2M6L6</accession>
<reference key="1">
    <citation type="journal article" date="1995" name="Nucleic Acids Res.">
        <title>Analysis of the Escherichia coli genome VI: DNA sequence of the region from 92.8 through 100 minutes.</title>
        <authorList>
            <person name="Burland V.D."/>
            <person name="Plunkett G. III"/>
            <person name="Sofia H.J."/>
            <person name="Daniels D.L."/>
            <person name="Blattner F.R."/>
        </authorList>
    </citation>
    <scope>NUCLEOTIDE SEQUENCE [LARGE SCALE GENOMIC DNA]</scope>
    <source>
        <strain>K12 / MG1655 / ATCC 47076</strain>
    </source>
</reference>
<reference key="2">
    <citation type="journal article" date="1997" name="Science">
        <title>The complete genome sequence of Escherichia coli K-12.</title>
        <authorList>
            <person name="Blattner F.R."/>
            <person name="Plunkett G. III"/>
            <person name="Bloch C.A."/>
            <person name="Perna N.T."/>
            <person name="Burland V."/>
            <person name="Riley M."/>
            <person name="Collado-Vides J."/>
            <person name="Glasner J.D."/>
            <person name="Rode C.K."/>
            <person name="Mayhew G.F."/>
            <person name="Gregor J."/>
            <person name="Davis N.W."/>
            <person name="Kirkpatrick H.A."/>
            <person name="Goeden M.A."/>
            <person name="Rose D.J."/>
            <person name="Mau B."/>
            <person name="Shao Y."/>
        </authorList>
    </citation>
    <scope>NUCLEOTIDE SEQUENCE [LARGE SCALE GENOMIC DNA]</scope>
    <source>
        <strain>K12 / MG1655 / ATCC 47076</strain>
    </source>
</reference>
<reference key="3">
    <citation type="journal article" date="2006" name="Mol. Syst. Biol.">
        <title>Highly accurate genome sequences of Escherichia coli K-12 strains MG1655 and W3110.</title>
        <authorList>
            <person name="Hayashi K."/>
            <person name="Morooka N."/>
            <person name="Yamamoto Y."/>
            <person name="Fujita K."/>
            <person name="Isono K."/>
            <person name="Choi S."/>
            <person name="Ohtsubo E."/>
            <person name="Baba T."/>
            <person name="Wanner B.L."/>
            <person name="Mori H."/>
            <person name="Horiuchi T."/>
        </authorList>
    </citation>
    <scope>NUCLEOTIDE SEQUENCE [LARGE SCALE GENOMIC DNA]</scope>
    <source>
        <strain>K12 / W3110 / ATCC 27325 / DSM 5911</strain>
    </source>
</reference>
<reference key="4">
    <citation type="journal article" date="1993" name="Nucleic Acids Res.">
        <title>Analysis of the Escherichia coli genome. IV. DNA sequence of the region from 89.2 to 92.8 minutes.</title>
        <authorList>
            <person name="Blattner F.R."/>
            <person name="Burland V.D."/>
            <person name="Plunkett G. III"/>
            <person name="Sofia H.J."/>
            <person name="Daniels D.L."/>
        </authorList>
    </citation>
    <scope>NUCLEOTIDE SEQUENCE [LARGE SCALE GENOMIC DNA] OF 9-510</scope>
    <source>
        <strain>K12 / MG1655 / ATCC 47076</strain>
    </source>
</reference>
<reference key="5">
    <citation type="journal article" date="1997" name="J. Bacteriol.">
        <title>The D-allose operon of Escherichia coli K-12.</title>
        <authorList>
            <person name="Kim C."/>
            <person name="Song S."/>
            <person name="Park C."/>
        </authorList>
    </citation>
    <scope>FUNCTION</scope>
</reference>
<sequence length="510" mass="56745">MATPYISMAGIGKSFGPVHALKSVNLTVYPGEIHALLGENGAGKSTLMKVLSGIHEPTKGTITINNISYNKLDHKLAAQLGIGIIYQELSVIDELTVLENLYIGRHLTKKICGVNIIDWREMRVRAAMMLLRVGLKVDLDEKVANLSISHKQMLEIAKTLMLDAKVIIMDEPTSSLTNKEVDYLFLIMNQLRKEGTAIVYISHKLAEIRRICDRYTVMKDGSSVCSGIVSDVSNDDIVRLMVGRELQNRFNAMKENVSNLAHETVFEVRNVTSRDRKKVRDISFSVCRGEILGFAGLVGSGRTELMNCLFGVDKRAGGEIRLNGKDISPRSPLDAVKKGMAYITESRRDNGFFPNFSIAQNMAISRSLKDGGYKGAMGLFHEVDEQRTAENQRELLALKCHSVNQNITELSGGNQQKVLISKWLCCCPEVIIFDEPTRGIDVGAKAEIYKVMRQLADDGKVILMVSSELPEIITVCDRIAVFCEGRLTQILTNRDDMSEEEIMAWALPQE</sequence>
<keyword id="KW-0067">ATP-binding</keyword>
<keyword id="KW-0997">Cell inner membrane</keyword>
<keyword id="KW-1003">Cell membrane</keyword>
<keyword id="KW-0472">Membrane</keyword>
<keyword id="KW-0547">Nucleotide-binding</keyword>
<keyword id="KW-1185">Reference proteome</keyword>
<keyword id="KW-0677">Repeat</keyword>
<keyword id="KW-0762">Sugar transport</keyword>
<keyword id="KW-1278">Translocase</keyword>
<keyword id="KW-0813">Transport</keyword>
<organism>
    <name type="scientific">Escherichia coli (strain K12)</name>
    <dbReference type="NCBI Taxonomy" id="83333"/>
    <lineage>
        <taxon>Bacteria</taxon>
        <taxon>Pseudomonadati</taxon>
        <taxon>Pseudomonadota</taxon>
        <taxon>Gammaproteobacteria</taxon>
        <taxon>Enterobacterales</taxon>
        <taxon>Enterobacteriaceae</taxon>
        <taxon>Escherichia</taxon>
    </lineage>
</organism>
<proteinExistence type="inferred from homology"/>
<feature type="chain" id="PRO_0000091926" description="D-allose import ATP-binding protein AlsA">
    <location>
        <begin position="1"/>
        <end position="510"/>
    </location>
</feature>
<feature type="domain" description="ABC transporter 1" evidence="2">
    <location>
        <begin position="6"/>
        <end position="245"/>
    </location>
</feature>
<feature type="domain" description="ABC transporter 2" evidence="2">
    <location>
        <begin position="260"/>
        <end position="509"/>
    </location>
</feature>
<feature type="binding site" evidence="2">
    <location>
        <begin position="38"/>
        <end position="45"/>
    </location>
    <ligand>
        <name>ATP</name>
        <dbReference type="ChEBI" id="CHEBI:30616"/>
    </ligand>
</feature>
<gene>
    <name type="primary">alsA</name>
    <name type="synonym">yjcW</name>
    <name type="ordered locus">b4087</name>
    <name type="ordered locus">JW4048</name>
</gene>
<name>ALSA_ECOLI</name>
<comment type="function">
    <text evidence="3">Part of the ABC transporter complex AlsBAC involved in D-allose import. Probably responsible for energy coupling to the transport system.</text>
</comment>
<comment type="catalytic activity">
    <reaction evidence="5">
        <text>D-allose(out) + ATP + H2O = D-allose(in) + ADP + phosphate + H(+)</text>
        <dbReference type="Rhea" id="RHEA:29799"/>
        <dbReference type="ChEBI" id="CHEBI:15377"/>
        <dbReference type="ChEBI" id="CHEBI:15378"/>
        <dbReference type="ChEBI" id="CHEBI:30616"/>
        <dbReference type="ChEBI" id="CHEBI:40822"/>
        <dbReference type="ChEBI" id="CHEBI:43474"/>
        <dbReference type="ChEBI" id="CHEBI:456216"/>
        <dbReference type="EC" id="7.5.2.8"/>
    </reaction>
</comment>
<comment type="subunit">
    <text evidence="4">The complex is composed of two ATP-binding proteins (AlsA), two transmembrane proteins (AlsC) and a solute-binding protein (AlsB).</text>
</comment>
<comment type="subcellular location">
    <subcellularLocation>
        <location evidence="1">Cell inner membrane</location>
        <topology evidence="1">Peripheral membrane protein</topology>
    </subcellularLocation>
</comment>
<comment type="similarity">
    <text evidence="4">Belongs to the ABC transporter superfamily. D-allose importer (TC 3.A.1.2.6) family.</text>
</comment>